<name>RS17_RALPJ</name>
<organism>
    <name type="scientific">Ralstonia pickettii (strain 12J)</name>
    <dbReference type="NCBI Taxonomy" id="402626"/>
    <lineage>
        <taxon>Bacteria</taxon>
        <taxon>Pseudomonadati</taxon>
        <taxon>Pseudomonadota</taxon>
        <taxon>Betaproteobacteria</taxon>
        <taxon>Burkholderiales</taxon>
        <taxon>Burkholderiaceae</taxon>
        <taxon>Ralstonia</taxon>
    </lineage>
</organism>
<accession>B2UEL0</accession>
<protein>
    <recommendedName>
        <fullName evidence="1">Small ribosomal subunit protein uS17</fullName>
    </recommendedName>
    <alternativeName>
        <fullName evidence="2">30S ribosomal protein S17</fullName>
    </alternativeName>
</protein>
<gene>
    <name evidence="1" type="primary">rpsQ</name>
    <name type="ordered locus">Rpic_3288</name>
</gene>
<keyword id="KW-0687">Ribonucleoprotein</keyword>
<keyword id="KW-0689">Ribosomal protein</keyword>
<keyword id="KW-0694">RNA-binding</keyword>
<keyword id="KW-0699">rRNA-binding</keyword>
<dbReference type="EMBL" id="CP001068">
    <property type="protein sequence ID" value="ACD28410.1"/>
    <property type="molecule type" value="Genomic_DNA"/>
</dbReference>
<dbReference type="SMR" id="B2UEL0"/>
<dbReference type="STRING" id="402626.Rpic_3288"/>
<dbReference type="KEGG" id="rpi:Rpic_3288"/>
<dbReference type="eggNOG" id="COG0186">
    <property type="taxonomic scope" value="Bacteria"/>
</dbReference>
<dbReference type="HOGENOM" id="CLU_073626_1_1_4"/>
<dbReference type="GO" id="GO:0022627">
    <property type="term" value="C:cytosolic small ribosomal subunit"/>
    <property type="evidence" value="ECO:0007669"/>
    <property type="project" value="TreeGrafter"/>
</dbReference>
<dbReference type="GO" id="GO:0019843">
    <property type="term" value="F:rRNA binding"/>
    <property type="evidence" value="ECO:0007669"/>
    <property type="project" value="UniProtKB-UniRule"/>
</dbReference>
<dbReference type="GO" id="GO:0003735">
    <property type="term" value="F:structural constituent of ribosome"/>
    <property type="evidence" value="ECO:0007669"/>
    <property type="project" value="InterPro"/>
</dbReference>
<dbReference type="GO" id="GO:0006412">
    <property type="term" value="P:translation"/>
    <property type="evidence" value="ECO:0007669"/>
    <property type="project" value="UniProtKB-UniRule"/>
</dbReference>
<dbReference type="CDD" id="cd00364">
    <property type="entry name" value="Ribosomal_uS17"/>
    <property type="match status" value="1"/>
</dbReference>
<dbReference type="Gene3D" id="2.40.50.140">
    <property type="entry name" value="Nucleic acid-binding proteins"/>
    <property type="match status" value="1"/>
</dbReference>
<dbReference type="HAMAP" id="MF_01345_B">
    <property type="entry name" value="Ribosomal_uS17_B"/>
    <property type="match status" value="1"/>
</dbReference>
<dbReference type="InterPro" id="IPR012340">
    <property type="entry name" value="NA-bd_OB-fold"/>
</dbReference>
<dbReference type="InterPro" id="IPR000266">
    <property type="entry name" value="Ribosomal_uS17"/>
</dbReference>
<dbReference type="InterPro" id="IPR019984">
    <property type="entry name" value="Ribosomal_uS17_bact/chlr"/>
</dbReference>
<dbReference type="InterPro" id="IPR019979">
    <property type="entry name" value="Ribosomal_uS17_CS"/>
</dbReference>
<dbReference type="NCBIfam" id="NF004123">
    <property type="entry name" value="PRK05610.1"/>
    <property type="match status" value="1"/>
</dbReference>
<dbReference type="NCBIfam" id="TIGR03635">
    <property type="entry name" value="uS17_bact"/>
    <property type="match status" value="1"/>
</dbReference>
<dbReference type="PANTHER" id="PTHR10744">
    <property type="entry name" value="40S RIBOSOMAL PROTEIN S11 FAMILY MEMBER"/>
    <property type="match status" value="1"/>
</dbReference>
<dbReference type="PANTHER" id="PTHR10744:SF1">
    <property type="entry name" value="SMALL RIBOSOMAL SUBUNIT PROTEIN US17M"/>
    <property type="match status" value="1"/>
</dbReference>
<dbReference type="Pfam" id="PF00366">
    <property type="entry name" value="Ribosomal_S17"/>
    <property type="match status" value="1"/>
</dbReference>
<dbReference type="PRINTS" id="PR00973">
    <property type="entry name" value="RIBOSOMALS17"/>
</dbReference>
<dbReference type="SUPFAM" id="SSF50249">
    <property type="entry name" value="Nucleic acid-binding proteins"/>
    <property type="match status" value="1"/>
</dbReference>
<dbReference type="PROSITE" id="PS00056">
    <property type="entry name" value="RIBOSOMAL_S17"/>
    <property type="match status" value="1"/>
</dbReference>
<sequence>MTEAATSLKRTLVGRVVSNKMDKTVTVLIENRVKHPLYGKYVVRSKKYHAHDEANQYNEGDKVEITESRPLSRTKSWVVSRLLEAARVI</sequence>
<comment type="function">
    <text evidence="1">One of the primary rRNA binding proteins, it binds specifically to the 5'-end of 16S ribosomal RNA.</text>
</comment>
<comment type="subunit">
    <text evidence="1">Part of the 30S ribosomal subunit.</text>
</comment>
<comment type="similarity">
    <text evidence="1">Belongs to the universal ribosomal protein uS17 family.</text>
</comment>
<reference key="1">
    <citation type="submission" date="2008-05" db="EMBL/GenBank/DDBJ databases">
        <title>Complete sequence of chromosome 1 of Ralstonia pickettii 12J.</title>
        <authorList>
            <person name="Lucas S."/>
            <person name="Copeland A."/>
            <person name="Lapidus A."/>
            <person name="Glavina del Rio T."/>
            <person name="Dalin E."/>
            <person name="Tice H."/>
            <person name="Bruce D."/>
            <person name="Goodwin L."/>
            <person name="Pitluck S."/>
            <person name="Meincke L."/>
            <person name="Brettin T."/>
            <person name="Detter J.C."/>
            <person name="Han C."/>
            <person name="Kuske C.R."/>
            <person name="Schmutz J."/>
            <person name="Larimer F."/>
            <person name="Land M."/>
            <person name="Hauser L."/>
            <person name="Kyrpides N."/>
            <person name="Mikhailova N."/>
            <person name="Marsh T."/>
            <person name="Richardson P."/>
        </authorList>
    </citation>
    <scope>NUCLEOTIDE SEQUENCE [LARGE SCALE GENOMIC DNA]</scope>
    <source>
        <strain>12J</strain>
    </source>
</reference>
<evidence type="ECO:0000255" key="1">
    <source>
        <dbReference type="HAMAP-Rule" id="MF_01345"/>
    </source>
</evidence>
<evidence type="ECO:0000305" key="2"/>
<feature type="chain" id="PRO_1000143289" description="Small ribosomal subunit protein uS17">
    <location>
        <begin position="1"/>
        <end position="89"/>
    </location>
</feature>
<proteinExistence type="inferred from homology"/>